<gene>
    <name evidence="1" type="primary">secB</name>
    <name type="ordered locus">Patl_3614</name>
</gene>
<comment type="function">
    <text evidence="1">One of the proteins required for the normal export of preproteins out of the cell cytoplasm. It is a molecular chaperone that binds to a subset of precursor proteins, maintaining them in a translocation-competent state. It also specifically binds to its receptor SecA.</text>
</comment>
<comment type="subunit">
    <text evidence="1">Homotetramer, a dimer of dimers. One homotetramer interacts with 1 SecA dimer.</text>
</comment>
<comment type="subcellular location">
    <subcellularLocation>
        <location evidence="1">Cytoplasm</location>
    </subcellularLocation>
</comment>
<comment type="similarity">
    <text evidence="1">Belongs to the SecB family.</text>
</comment>
<organism>
    <name type="scientific">Pseudoalteromonas atlantica (strain T6c / ATCC BAA-1087)</name>
    <dbReference type="NCBI Taxonomy" id="3042615"/>
    <lineage>
        <taxon>Bacteria</taxon>
        <taxon>Pseudomonadati</taxon>
        <taxon>Pseudomonadota</taxon>
        <taxon>Gammaproteobacteria</taxon>
        <taxon>Alteromonadales</taxon>
        <taxon>Alteromonadaceae</taxon>
        <taxon>Paraglaciecola</taxon>
    </lineage>
</organism>
<evidence type="ECO:0000255" key="1">
    <source>
        <dbReference type="HAMAP-Rule" id="MF_00821"/>
    </source>
</evidence>
<name>SECB_PSEA6</name>
<keyword id="KW-0143">Chaperone</keyword>
<keyword id="KW-0963">Cytoplasm</keyword>
<keyword id="KW-0653">Protein transport</keyword>
<keyword id="KW-0811">Translocation</keyword>
<keyword id="KW-0813">Transport</keyword>
<sequence>MAEENQTTPADAAQAAQGPQFAIQRIYTKDISFETPNSPAIFQKEWKPEVQLDLDTRSALIEENVYEIVLAVTVTAMLGEETAFLCEVQQAGIFAIGEMPEQNKAHMLGSFCPNTLFPYARETISNLVNRGTFPPLNLAPVNFDAIFAAYMQKRAAQQAQEQAPTQLDA</sequence>
<proteinExistence type="inferred from homology"/>
<protein>
    <recommendedName>
        <fullName evidence="1">Protein-export protein SecB</fullName>
    </recommendedName>
</protein>
<feature type="chain" id="PRO_0000318257" description="Protein-export protein SecB">
    <location>
        <begin position="1"/>
        <end position="169"/>
    </location>
</feature>
<dbReference type="EMBL" id="CP000388">
    <property type="protein sequence ID" value="ABG42116.1"/>
    <property type="molecule type" value="Genomic_DNA"/>
</dbReference>
<dbReference type="RefSeq" id="WP_011576340.1">
    <property type="nucleotide sequence ID" value="NC_008228.1"/>
</dbReference>
<dbReference type="SMR" id="Q15PS2"/>
<dbReference type="STRING" id="342610.Patl_3614"/>
<dbReference type="KEGG" id="pat:Patl_3614"/>
<dbReference type="eggNOG" id="COG1952">
    <property type="taxonomic scope" value="Bacteria"/>
</dbReference>
<dbReference type="HOGENOM" id="CLU_111574_1_0_6"/>
<dbReference type="OrthoDB" id="9795145at2"/>
<dbReference type="Proteomes" id="UP000001981">
    <property type="component" value="Chromosome"/>
</dbReference>
<dbReference type="GO" id="GO:0005737">
    <property type="term" value="C:cytoplasm"/>
    <property type="evidence" value="ECO:0007669"/>
    <property type="project" value="UniProtKB-SubCell"/>
</dbReference>
<dbReference type="GO" id="GO:0051082">
    <property type="term" value="F:unfolded protein binding"/>
    <property type="evidence" value="ECO:0007669"/>
    <property type="project" value="InterPro"/>
</dbReference>
<dbReference type="GO" id="GO:0006457">
    <property type="term" value="P:protein folding"/>
    <property type="evidence" value="ECO:0007669"/>
    <property type="project" value="UniProtKB-UniRule"/>
</dbReference>
<dbReference type="GO" id="GO:0051262">
    <property type="term" value="P:protein tetramerization"/>
    <property type="evidence" value="ECO:0007669"/>
    <property type="project" value="InterPro"/>
</dbReference>
<dbReference type="GO" id="GO:0015031">
    <property type="term" value="P:protein transport"/>
    <property type="evidence" value="ECO:0007669"/>
    <property type="project" value="UniProtKB-UniRule"/>
</dbReference>
<dbReference type="Gene3D" id="3.10.420.10">
    <property type="entry name" value="SecB-like"/>
    <property type="match status" value="1"/>
</dbReference>
<dbReference type="HAMAP" id="MF_00821">
    <property type="entry name" value="SecB"/>
    <property type="match status" value="1"/>
</dbReference>
<dbReference type="InterPro" id="IPR003708">
    <property type="entry name" value="SecB"/>
</dbReference>
<dbReference type="InterPro" id="IPR035958">
    <property type="entry name" value="SecB-like_sf"/>
</dbReference>
<dbReference type="NCBIfam" id="NF004393">
    <property type="entry name" value="PRK05751.1-4"/>
    <property type="match status" value="1"/>
</dbReference>
<dbReference type="NCBIfam" id="TIGR00809">
    <property type="entry name" value="secB"/>
    <property type="match status" value="1"/>
</dbReference>
<dbReference type="PANTHER" id="PTHR36918">
    <property type="match status" value="1"/>
</dbReference>
<dbReference type="PANTHER" id="PTHR36918:SF1">
    <property type="entry name" value="PROTEIN-EXPORT PROTEIN SECB"/>
    <property type="match status" value="1"/>
</dbReference>
<dbReference type="Pfam" id="PF02556">
    <property type="entry name" value="SecB"/>
    <property type="match status" value="1"/>
</dbReference>
<dbReference type="PRINTS" id="PR01594">
    <property type="entry name" value="SECBCHAPRONE"/>
</dbReference>
<dbReference type="SUPFAM" id="SSF54611">
    <property type="entry name" value="SecB-like"/>
    <property type="match status" value="1"/>
</dbReference>
<reference key="1">
    <citation type="submission" date="2006-06" db="EMBL/GenBank/DDBJ databases">
        <title>Complete sequence of Pseudoalteromonas atlantica T6c.</title>
        <authorList>
            <consortium name="US DOE Joint Genome Institute"/>
            <person name="Copeland A."/>
            <person name="Lucas S."/>
            <person name="Lapidus A."/>
            <person name="Barry K."/>
            <person name="Detter J.C."/>
            <person name="Glavina del Rio T."/>
            <person name="Hammon N."/>
            <person name="Israni S."/>
            <person name="Dalin E."/>
            <person name="Tice H."/>
            <person name="Pitluck S."/>
            <person name="Saunders E."/>
            <person name="Brettin T."/>
            <person name="Bruce D."/>
            <person name="Han C."/>
            <person name="Tapia R."/>
            <person name="Gilna P."/>
            <person name="Schmutz J."/>
            <person name="Larimer F."/>
            <person name="Land M."/>
            <person name="Hauser L."/>
            <person name="Kyrpides N."/>
            <person name="Kim E."/>
            <person name="Karls A.C."/>
            <person name="Bartlett D."/>
            <person name="Higgins B.P."/>
            <person name="Richardson P."/>
        </authorList>
    </citation>
    <scope>NUCLEOTIDE SEQUENCE [LARGE SCALE GENOMIC DNA]</scope>
    <source>
        <strain>T6c / ATCC BAA-1087</strain>
    </source>
</reference>
<accession>Q15PS2</accession>